<comment type="function">
    <text evidence="3 4 5 6 8 9">Protease subunit of subtilase cytotoxin SubAB5 (PubMed:17024087). An endoprotease specific for host endoplasmic reticulum (ER) chaperone BiP/HSPA5, has no activity on human HSP70 or HSPA8 (PubMed:17024087). Cleaves between 'Leu-416' and 'Leu-417' of BiP/HSPA5 in the hinge between BiP's ATPase and protein-binding domains (PubMed:17024087). This induces host ER stress response and eventual cell death (PubMed:18005237, PubMed:18433465). Culture supernatant of E.coli expressing both subA and subB are toxic for Vero cells (African green monkey kidney cell line), Chinese hamster ovary cells and Hct-8 cells (human colonic epithelial cell line); the subunits are not toxic individually (PubMed:15226357). Purified SubAB5 is highly toxic, &lt;0.1 pg is able to kill at least 50% of 30'000 Vero cells in a microtiter plate assay after 3 days; no cytotoxicity is seen at 24 hours (PubMed:15226357). Preabsorption with cells expressing a ganglioside GM2 mimic reduced cytotoxicity of SubAB5 by 93% in the Vero cytotoxicity assay (PubMed:15226357). Intraperitoneal injection of 200 ng of purified SubAB5 kills mice; the higher the dose the faster the mice die. Animals injected intraperitoneally with purified SubAB5 have microvascular thrombi in the brain and other organs, including the renal tubules and glomeruli (PubMed:15226357). Injection induces an unfolded response in mice (PubMed:17024087). Mice fed E.coli cells expressing cloned SubAB5 experience drastic weight loss and appear ill and lethargic (PubMed:15226357). Protein synthesis in Vero cells is transiently inhibited by SubAB5; both subunits are required for this effect (PubMed:17101670, PubMed:18005237, PubMed:18433465). Inhibition of protein synthesis is prevented by brefeldin A; cells are arrested in the G1 phase (PubMed:18005237). SubAB5 at 100 ng/ml induced caspase-dependent apoptosis in Vero cells through mitochondrial membrane damage (PubMed:19380466).</text>
</comment>
<comment type="subunit">
    <text evidence="10 13">Forms a complex with SubB with the stoichiometry SubA1:SubB5 (called SubAB5) (PubMed:15226357, PubMed:23921389).</text>
</comment>
<comment type="subcellular location">
    <subcellularLocation>
        <location evidence="3">Secreted</location>
    </subcellularLocation>
    <subcellularLocation>
        <location evidence="3 5">Host cytoplasm</location>
        <location evidence="3 5">Host cytosol</location>
    </subcellularLocation>
    <subcellularLocation>
        <location evidence="14 15 16">Host endoplasmic reticulum lumen</location>
    </subcellularLocation>
    <text evidence="3 4 6 7">Colocalizes with host BiP/HSPA5 in the endoplasmic reticulum of Vero cells, its activity on BiP/HSPA5 is blocked by pretreatment with brefeldin A, which disrupts the Golgi apparatus and inhibits retrograde transport from the cell surface to the Golgi (PubMed:17024087, PubMed:18005237). Using different inhibitors it has been shown to be actively internalized by membrane-bound vesicles and undergoes clathrin-dependent retrograde transport, via early endosomes and the Golgi network, to the endoplasmic reticulum (PubMed:18042253). Trafficking is similar in Vero cells, human HeLa cells and murine N2A cells (PubMed:18042253).</text>
</comment>
<comment type="induction">
    <text evidence="3">Part of the subA-subB operon (PubMed:15226357).</text>
</comment>
<comment type="domain">
    <text evidence="4 10">The catalytic charge relay system lies at the bottom of a deep cleft which probably accounts for its substrate specificity (PubMed:17024087, PubMed:23921389). The C-terminal A2 domain (approximately residues 322-347) penetrates into the central pore of the SubB pentamer, making different contacts with each SubB subunit (PubMed:23921389).</text>
</comment>
<comment type="disruption phenotype">
    <text evidence="3">No longer toxic to CHO cells when deletion construct is coexpressed with subB (PubMed:15226357).</text>
</comment>
<comment type="biotechnology">
    <text evidence="3">Injection of the inactive mutant protein (Ala instead of ser at position 272) in mice has no deleterious effects and elicits an antibody response, suggesting it could be used as a vaccine (PubMed:15226357).</text>
</comment>
<comment type="miscellaneous">
    <text evidence="11">The E.coli strain this operon was isolated from causes hemolytic uremic syndrome (HUS) and also encodes Stx, a Shigella-type toxin.</text>
</comment>
<comment type="similarity">
    <text evidence="12">Belongs to the peptidase S8 family.</text>
</comment>
<name>SUBA_ECOLX</name>
<dbReference type="EC" id="3.4.21.-" evidence="4"/>
<dbReference type="EMBL" id="AF399919">
    <property type="protein sequence ID" value="AAT68785.1"/>
    <property type="molecule type" value="Genomic_DNA"/>
</dbReference>
<dbReference type="PDB" id="2IY9">
    <property type="method" value="X-ray"/>
    <property type="resolution" value="1.80 A"/>
    <property type="chains" value="A=1-347"/>
</dbReference>
<dbReference type="PDB" id="4BWG">
    <property type="method" value="X-ray"/>
    <property type="resolution" value="2.60 A"/>
    <property type="chains" value="A/G=1-347"/>
</dbReference>
<dbReference type="PDBsum" id="2IY9"/>
<dbReference type="PDBsum" id="4BWG"/>
<dbReference type="SMR" id="Q6EZC2"/>
<dbReference type="DIP" id="DIP-60412N"/>
<dbReference type="IntAct" id="Q6EZC2">
    <property type="interactions" value="1"/>
</dbReference>
<dbReference type="MEROPS" id="S08.121"/>
<dbReference type="EvolutionaryTrace" id="Q6EZC2"/>
<dbReference type="PHI-base" id="PHI:12220"/>
<dbReference type="GO" id="GO:0005576">
    <property type="term" value="C:extracellular region"/>
    <property type="evidence" value="ECO:0007669"/>
    <property type="project" value="UniProtKB-SubCell"/>
</dbReference>
<dbReference type="GO" id="GO:0044164">
    <property type="term" value="C:host cell cytosol"/>
    <property type="evidence" value="ECO:0007669"/>
    <property type="project" value="UniProtKB-SubCell"/>
</dbReference>
<dbReference type="GO" id="GO:0044166">
    <property type="term" value="C:host cell endoplasmic reticulum lumen"/>
    <property type="evidence" value="ECO:0000315"/>
    <property type="project" value="UniProtKB"/>
</dbReference>
<dbReference type="GO" id="GO:0004252">
    <property type="term" value="F:serine-type endopeptidase activity"/>
    <property type="evidence" value="ECO:0000315"/>
    <property type="project" value="UniProtKB"/>
</dbReference>
<dbReference type="GO" id="GO:0090729">
    <property type="term" value="F:toxin activity"/>
    <property type="evidence" value="ECO:0007669"/>
    <property type="project" value="UniProtKB-KW"/>
</dbReference>
<dbReference type="GO" id="GO:0006508">
    <property type="term" value="P:proteolysis"/>
    <property type="evidence" value="ECO:0007669"/>
    <property type="project" value="UniProtKB-KW"/>
</dbReference>
<dbReference type="CDD" id="cd00306">
    <property type="entry name" value="Peptidases_S8_S53"/>
    <property type="match status" value="1"/>
</dbReference>
<dbReference type="Gene3D" id="3.40.50.200">
    <property type="entry name" value="Peptidase S8/S53 domain"/>
    <property type="match status" value="1"/>
</dbReference>
<dbReference type="InterPro" id="IPR000209">
    <property type="entry name" value="Peptidase_S8/S53_dom"/>
</dbReference>
<dbReference type="InterPro" id="IPR036852">
    <property type="entry name" value="Peptidase_S8/S53_dom_sf"/>
</dbReference>
<dbReference type="InterPro" id="IPR050131">
    <property type="entry name" value="Peptidase_S8_subtilisin-like"/>
</dbReference>
<dbReference type="PANTHER" id="PTHR43806:SF11">
    <property type="entry name" value="CEREVISIN-RELATED"/>
    <property type="match status" value="1"/>
</dbReference>
<dbReference type="PANTHER" id="PTHR43806">
    <property type="entry name" value="PEPTIDASE S8"/>
    <property type="match status" value="1"/>
</dbReference>
<dbReference type="Pfam" id="PF00082">
    <property type="entry name" value="Peptidase_S8"/>
    <property type="match status" value="1"/>
</dbReference>
<dbReference type="SUPFAM" id="SSF52743">
    <property type="entry name" value="Subtilisin-like"/>
    <property type="match status" value="1"/>
</dbReference>
<dbReference type="PROSITE" id="PS00014">
    <property type="entry name" value="ER_TARGET"/>
    <property type="match status" value="1"/>
</dbReference>
<dbReference type="PROSITE" id="PS51892">
    <property type="entry name" value="SUBTILASE"/>
    <property type="match status" value="1"/>
</dbReference>
<keyword id="KW-0002">3D-structure</keyword>
<keyword id="KW-0903">Direct protein sequencing</keyword>
<keyword id="KW-1015">Disulfide bond</keyword>
<keyword id="KW-1035">Host cytoplasm</keyword>
<keyword id="KW-1038">Host endoplasmic reticulum</keyword>
<keyword id="KW-0378">Hydrolase</keyword>
<keyword id="KW-0614">Plasmid</keyword>
<keyword id="KW-0645">Protease</keyword>
<keyword id="KW-0964">Secreted</keyword>
<keyword id="KW-0720">Serine protease</keyword>
<keyword id="KW-0732">Signal</keyword>
<keyword id="KW-0800">Toxin</keyword>
<keyword id="KW-0843">Virulence</keyword>
<protein>
    <recommendedName>
        <fullName evidence="11">Subtilase cytotoxin subunit A</fullName>
        <ecNumber evidence="4">3.4.21.-</ecNumber>
    </recommendedName>
</protein>
<organism>
    <name type="scientific">Escherichia coli</name>
    <dbReference type="NCBI Taxonomy" id="562"/>
    <lineage>
        <taxon>Bacteria</taxon>
        <taxon>Pseudomonadati</taxon>
        <taxon>Pseudomonadota</taxon>
        <taxon>Gammaproteobacteria</taxon>
        <taxon>Enterobacterales</taxon>
        <taxon>Enterobacteriaceae</taxon>
        <taxon>Escherichia</taxon>
    </lineage>
</organism>
<accession>Q6EZC2</accession>
<evidence type="ECO:0000255" key="1"/>
<evidence type="ECO:0000255" key="2">
    <source>
        <dbReference type="PROSITE-ProRule" id="PRU01240"/>
    </source>
</evidence>
<evidence type="ECO:0000269" key="3">
    <source>
    </source>
</evidence>
<evidence type="ECO:0000269" key="4">
    <source>
    </source>
</evidence>
<evidence type="ECO:0000269" key="5">
    <source>
    </source>
</evidence>
<evidence type="ECO:0000269" key="6">
    <source>
    </source>
</evidence>
<evidence type="ECO:0000269" key="7">
    <source>
    </source>
</evidence>
<evidence type="ECO:0000269" key="8">
    <source>
    </source>
</evidence>
<evidence type="ECO:0000269" key="9">
    <source>
    </source>
</evidence>
<evidence type="ECO:0000269" key="10">
    <source>
    </source>
</evidence>
<evidence type="ECO:0000303" key="11">
    <source>
    </source>
</evidence>
<evidence type="ECO:0000305" key="12"/>
<evidence type="ECO:0000305" key="13">
    <source>
    </source>
</evidence>
<evidence type="ECO:0000305" key="14">
    <source>
    </source>
</evidence>
<evidence type="ECO:0000305" key="15">
    <source>
    </source>
</evidence>
<evidence type="ECO:0000305" key="16">
    <source>
    </source>
</evidence>
<evidence type="ECO:0007744" key="17">
    <source>
        <dbReference type="PDB" id="2IY9"/>
    </source>
</evidence>
<evidence type="ECO:0007744" key="18">
    <source>
        <dbReference type="PDB" id="4BWG"/>
    </source>
</evidence>
<evidence type="ECO:0007829" key="19">
    <source>
        <dbReference type="PDB" id="2IY9"/>
    </source>
</evidence>
<evidence type="ECO:0007829" key="20">
    <source>
        <dbReference type="PDB" id="4BWG"/>
    </source>
</evidence>
<reference key="1">
    <citation type="journal article" date="2001" name="Infect. Immun.">
        <title>Characterization of Saa, a novel autoagglutinating adhesin produced by locus of enterocyte effacement-negative Shiga-toxigenic Escherichia coli strains that are virulent for humans.</title>
        <authorList>
            <person name="Paton A.W."/>
            <person name="Srimanote P."/>
            <person name="Woodrow M.C."/>
            <person name="Paton J.C."/>
        </authorList>
    </citation>
    <scope>NUCLEOTIDE SEQUENCE [GENOMIC DNA]</scope>
    <source>
        <strain>O113:H21 / 98NK2 / STEC</strain>
        <plasmid>megaplasmid pO113</plasmid>
    </source>
</reference>
<reference key="2">
    <citation type="journal article" date="2007" name="Infect. Immun.">
        <title>Two distinct cytotoxic activities of subtilase cytotoxin produced by Shiga-toxigenic Escherichia coli.</title>
        <authorList>
            <person name="Morinaga N."/>
            <person name="Yahiro K."/>
            <person name="Matsuura G."/>
            <person name="Watanabe M."/>
            <person name="Nomura F."/>
            <person name="Moss J."/>
            <person name="Noda M."/>
        </authorList>
    </citation>
    <scope>NUCLEOTIDE SEQUENCE [GENOMIC DNA]</scope>
    <scope>FUNCTION</scope>
    <scope>SUBCELLULAR LOCATION</scope>
    <source>
        <strain>O29</strain>
    </source>
</reference>
<reference key="3">
    <citation type="journal article" date="2004" name="J. Exp. Med.">
        <title>A new family of potent AB(5) cytotoxins produced by Shiga toxigenic Escherichia coli.</title>
        <authorList>
            <person name="Paton A.W."/>
            <person name="Srimanote P."/>
            <person name="Talbot U.M."/>
            <person name="Wang H."/>
            <person name="Paton J.C."/>
        </authorList>
    </citation>
    <scope>PROTEIN SEQUENCE OF N-TERMINUS</scope>
    <scope>FUNCTION</scope>
    <scope>PUTATIVE ACTIVE SITE</scope>
    <scope>SUBUNIT</scope>
    <scope>SUBCELLULAR LOCATION</scope>
    <scope>OPERON</scope>
    <scope>DISRUPTION PHENOTYPE</scope>
    <scope>BIOTECHNOLOGY</scope>
    <scope>MUTAGENESIS OF SER-272</scope>
    <source>
        <strain>O113:H21 / 98NK2 / STEC</strain>
        <plasmid>megaplasmid pO113</plasmid>
    </source>
</reference>
<reference key="4">
    <citation type="journal article" date="2004" name="J. Exp. Med.">
        <title>A new family of potent AB(5) cytotoxins produced by Shiga toxigenic Escherichia coli.</title>
        <authorList>
            <person name="Paton A.W."/>
            <person name="Srimanote P."/>
            <person name="Talbot U.M."/>
            <person name="Wang H."/>
            <person name="Paton J.C."/>
        </authorList>
    </citation>
    <scope>ERRATUM OF PUBMED:15226357</scope>
</reference>
<reference key="5">
    <citation type="journal article" date="2008" name="Cell. Microbiol.">
        <title>Clathrin-dependent trafficking of subtilase cytotoxin, a novel AB5 toxin that targets the endoplasmic reticulum chaperone BiP.</title>
        <authorList>
            <person name="Chong D.C."/>
            <person name="Paton J.C."/>
            <person name="Thorpe C.M."/>
            <person name="Paton A.W."/>
        </authorList>
    </citation>
    <scope>SUBCELLULAR LOCATION</scope>
</reference>
<reference key="6">
    <citation type="journal article" date="2008" name="Cell. Microbiol.">
        <title>Subtilase cytotoxin, produced by Shiga-toxigenic Escherichia coli, transiently inhibits protein synthesis of Vero cells via degradation of BiP and induces cell cycle arrest at G1 by downregulation of cyclin D1.</title>
        <authorList>
            <person name="Morinaga N."/>
            <person name="Yahiro K."/>
            <person name="Matsuura G."/>
            <person name="Moss J."/>
            <person name="Noda M."/>
        </authorList>
    </citation>
    <scope>FUNCTION</scope>
    <scope>SUBCELLULAR LOCATION</scope>
    <scope>MUTAGENESIS OF SER-272</scope>
</reference>
<reference key="7">
    <citation type="journal article" date="2008" name="Cell. Microbiol.">
        <title>Subtilase cytotoxin activates PERK, IRE1 and ATF6 endoplasmic reticulum stress-signalling pathways.</title>
        <authorList>
            <person name="Wolfson J.J."/>
            <person name="May K.L."/>
            <person name="Thorpe C.M."/>
            <person name="Jandhyala D.M."/>
            <person name="Paton J.C."/>
            <person name="Paton A.W."/>
        </authorList>
    </citation>
    <scope>FUNCTION</scope>
    <scope>MUTAGENESIS OF SER-272</scope>
</reference>
<reference key="8">
    <citation type="journal article" date="2009" name="Infect. Immun.">
        <title>Novel subtilase cytotoxin produced by Shiga-toxigenic Escherichia coli induces apoptosis in Vero cells via mitochondrial membrane damage.</title>
        <authorList>
            <person name="Matsuura G."/>
            <person name="Morinaga N."/>
            <person name="Yahiro K."/>
            <person name="Komine R."/>
            <person name="Moss J."/>
            <person name="Yoshida H."/>
            <person name="Noda M."/>
        </authorList>
    </citation>
    <scope>FUNCTION</scope>
    <scope>MUTAGENESIS OF SER-272</scope>
</reference>
<reference evidence="17" key="9">
    <citation type="journal article" date="2006" name="Nature">
        <title>AB5 subtilase cytotoxin inactivates the endoplasmic reticulum chaperone BiP.</title>
        <authorList>
            <person name="Paton A.W."/>
            <person name="Beddoe T."/>
            <person name="Thorpe C.M."/>
            <person name="Whisstock J.C."/>
            <person name="Wilce M.C."/>
            <person name="Rossjohn J."/>
            <person name="Talbot U.M."/>
            <person name="Paton J.C."/>
        </authorList>
    </citation>
    <scope>X-RAY CRYSTALLOGRAPHY (1.80 ANGSTROMS)</scope>
    <scope>DISULFIDE BONDS</scope>
    <scope>FUNCTION</scope>
    <scope>SUBSTRATE SPECIFICITY</scope>
    <scope>CATALYTIC ACTIVITY</scope>
    <scope>SUBCELLULAR LOCATION</scope>
    <scope>DOMAIN</scope>
    <scope>MUTAGENESIS OF SER-272</scope>
</reference>
<reference evidence="18" key="10">
    <citation type="journal article" date="2013" name="J. Biol. Chem.">
        <title>Structural basis of subtilase cytotoxin SubAB assembly.</title>
        <authorList>
            <person name="Le Nours J."/>
            <person name="Paton A.W."/>
            <person name="Byres E."/>
            <person name="Troy S."/>
            <person name="Herdman B.P."/>
            <person name="Johnson M.D."/>
            <person name="Paton J.C."/>
            <person name="Rossjohn J."/>
            <person name="Beddoe T."/>
        </authorList>
    </citation>
    <scope>X-RAY CRYSTALLOGRAPHY (2.60 ANGSTROMS) IN COMPLEX WITH SUBB</scope>
    <scope>SUBUNIT</scope>
    <scope>SUBCELLULAR LOCATION</scope>
    <scope>DOMAIN</scope>
    <scope>DISULFIDE BONDS</scope>
</reference>
<sequence length="347" mass="37494">MLKILWTYILFLLFISASARAEKPWYFDAIGLTETTMSLTDKNTPVVVSVVDSGVAFIGGLSDSEFAKFSFTQDGSPFPVKKSEALYIHGTAMASLIASRYGIYGVYPHALISSRRVIPDGVQDSWIRAIESIMSNVFLAPGEEKIINISGGQKGVASASVWTELLSRMGRNNDRLIVAAVGNDGADIRKLSAQQRIWPAAYHPVSSVNKKQDPVIRVAALAQYRKGETPVLHGGGITGSRFGNNWVDIAAPGQNITFLRPDAKTGTGSGTSEATAIVSGVLAAMTSCNPRATATELKRTLLESADKYPSLVDKVTEGRVLNAEKAISMFCKKNYIPVRQGRMSEEL</sequence>
<geneLocation type="plasmid">
    <name>megaplasmid pO113</name>
</geneLocation>
<feature type="signal peptide" evidence="1 13">
    <location>
        <begin position="1"/>
        <end position="21"/>
    </location>
</feature>
<feature type="chain" id="PRO_5004273014" description="Subtilase cytotoxin subunit A" evidence="1">
    <location>
        <begin position="22"/>
        <end position="347"/>
    </location>
</feature>
<feature type="domain" description="Peptidase S8" evidence="2">
    <location>
        <begin position="24"/>
        <end position="327"/>
    </location>
</feature>
<feature type="region of interest" description="A2 domain" evidence="10">
    <location>
        <begin position="322"/>
        <end position="347"/>
    </location>
</feature>
<feature type="short sequence motif" description="Prevents secretion from ER" evidence="1">
    <location>
        <begin position="344"/>
        <end position="347"/>
    </location>
</feature>
<feature type="active site" description="Charge relay system" evidence="2 11">
    <location>
        <position position="52"/>
    </location>
</feature>
<feature type="active site" description="Charge relay system" evidence="2 11">
    <location>
        <position position="89"/>
    </location>
</feature>
<feature type="active site" description="Charge relay system" evidence="2 11">
    <location>
        <position position="272"/>
    </location>
</feature>
<feature type="disulfide bond" evidence="10 17 18">
    <location>
        <begin position="288"/>
        <end position="331"/>
    </location>
</feature>
<feature type="sequence variant" description="In strain: O29." evidence="5">
    <original>A</original>
    <variation>G</variation>
    <location>
        <position position="263"/>
    </location>
</feature>
<feature type="mutagenesis site" description="Reduces cytotoxicity on Vero cells by more than 99.9%, no toxic effect on mice when injected as purified SubAB5. Does not cleave host BiP/HSPA5 in Vero cells nor purified BiP/HSPA5, does not induce the unfolded protein response in mice. No longer inhibits protein synthesis in Vero cells. Does not induce apoptosis in Vero cells." evidence="3 4 6 8 9">
    <original>S</original>
    <variation>A</variation>
    <location>
        <position position="272"/>
    </location>
</feature>
<feature type="helix" evidence="19">
    <location>
        <begin position="26"/>
        <end position="30"/>
    </location>
</feature>
<feature type="helix" evidence="19">
    <location>
        <begin position="34"/>
        <end position="38"/>
    </location>
</feature>
<feature type="strand" evidence="19">
    <location>
        <begin position="47"/>
        <end position="53"/>
    </location>
</feature>
<feature type="helix" evidence="19">
    <location>
        <begin position="59"/>
        <end position="61"/>
    </location>
</feature>
<feature type="strand" evidence="19">
    <location>
        <begin position="65"/>
        <end position="70"/>
    </location>
</feature>
<feature type="strand" evidence="19">
    <location>
        <begin position="81"/>
        <end position="83"/>
    </location>
</feature>
<feature type="helix" evidence="19">
    <location>
        <begin position="84"/>
        <end position="98"/>
    </location>
</feature>
<feature type="strand" evidence="19">
    <location>
        <begin position="100"/>
        <end position="103"/>
    </location>
</feature>
<feature type="strand" evidence="19">
    <location>
        <begin position="111"/>
        <end position="116"/>
    </location>
</feature>
<feature type="strand" evidence="19">
    <location>
        <begin position="119"/>
        <end position="121"/>
    </location>
</feature>
<feature type="helix" evidence="19">
    <location>
        <begin position="125"/>
        <end position="134"/>
    </location>
</feature>
<feature type="strand" evidence="19">
    <location>
        <begin position="143"/>
        <end position="151"/>
    </location>
</feature>
<feature type="helix" evidence="19">
    <location>
        <begin position="160"/>
        <end position="172"/>
    </location>
</feature>
<feature type="strand" evidence="19">
    <location>
        <begin position="176"/>
        <end position="180"/>
    </location>
</feature>
<feature type="turn" evidence="19">
    <location>
        <begin position="188"/>
        <end position="190"/>
    </location>
</feature>
<feature type="turn" evidence="19">
    <location>
        <begin position="193"/>
        <end position="195"/>
    </location>
</feature>
<feature type="turn" evidence="19">
    <location>
        <begin position="199"/>
        <end position="201"/>
    </location>
</feature>
<feature type="helix" evidence="19">
    <location>
        <begin position="207"/>
        <end position="211"/>
    </location>
</feature>
<feature type="strand" evidence="19">
    <location>
        <begin position="215"/>
        <end position="221"/>
    </location>
</feature>
<feature type="strand" evidence="19">
    <location>
        <begin position="236"/>
        <end position="238"/>
    </location>
</feature>
<feature type="turn" evidence="19">
    <location>
        <begin position="244"/>
        <end position="246"/>
    </location>
</feature>
<feature type="strand" evidence="19">
    <location>
        <begin position="248"/>
        <end position="252"/>
    </location>
</feature>
<feature type="strand" evidence="19">
    <location>
        <begin position="254"/>
        <end position="259"/>
    </location>
</feature>
<feature type="strand" evidence="19">
    <location>
        <begin position="265"/>
        <end position="268"/>
    </location>
</feature>
<feature type="helix" evidence="19">
    <location>
        <begin position="271"/>
        <end position="288"/>
    </location>
</feature>
<feature type="helix" evidence="19">
    <location>
        <begin position="294"/>
        <end position="304"/>
    </location>
</feature>
<feature type="strand" evidence="19">
    <location>
        <begin position="305"/>
        <end position="307"/>
    </location>
</feature>
<feature type="helix" evidence="19">
    <location>
        <begin position="309"/>
        <end position="311"/>
    </location>
</feature>
<feature type="turn" evidence="19">
    <location>
        <begin position="312"/>
        <end position="314"/>
    </location>
</feature>
<feature type="helix" evidence="19">
    <location>
        <begin position="316"/>
        <end position="318"/>
    </location>
</feature>
<feature type="helix" evidence="19">
    <location>
        <begin position="323"/>
        <end position="331"/>
    </location>
</feature>
<feature type="helix" evidence="20">
    <location>
        <begin position="335"/>
        <end position="339"/>
    </location>
</feature>
<proteinExistence type="evidence at protein level"/>
<gene>
    <name evidence="11" type="primary">subA</name>
</gene>